<comment type="function">
    <text evidence="5 6 7 8 9 10 11 12 13">Extracellular matrix and cell adhesion protein that plays a role in nervous system development and in synaptic plasticity. Both soluble and membranous forms promote neurite outgrowth of cerebellar and hippocampal neurons and suppress neuronal cell death. Plays a role in neuronal positioning of pyramidal neurons as well as in regulation of both the number of interneurons and the efficacy of GABAergic synapses. May play a role in regulating cell migration in nerve regeneration and cortical development. Potentiates integrin-dependent cell migration towards extracellular matrix proteins. Recruits ANK3 to the plasma membrane.</text>
</comment>
<comment type="subunit">
    <text>May interact with L1CAM. May interact with ITGB1/ITGA1 heterodimer and ITGB1/ITGA2 heterodimer as well as with ANK3.</text>
</comment>
<comment type="interaction">
    <interactant intactId="EBI-7703109">
        <id>P70232</id>
    </interactant>
    <interactant intactId="EBI-7703151">
        <id>Q9JMB8</id>
        <label>Cntn6</label>
    </interactant>
    <organismsDiffer>false</organismsDiffer>
    <experiments>5</experiments>
</comment>
<comment type="interaction">
    <interactant intactId="EBI-7703109">
        <id>P70232</id>
    </interactant>
    <interactant intactId="EBI-6597520">
        <id>P18052</id>
        <label>Ptpra</label>
    </interactant>
    <organismsDiffer>false</organismsDiffer>
    <experiments>4</experiments>
</comment>
<comment type="subcellular location">
    <subcellularLocation>
        <location>Cell membrane</location>
        <topology>Single-pass type I membrane protein</topology>
    </subcellularLocation>
    <text>Soluble forms produced by cleavage/shedding also exist.</text>
</comment>
<comment type="subcellular location">
    <molecule>Processed neural cell adhesion molecule L1-like protein</molecule>
    <subcellularLocation>
        <location>Secreted</location>
        <location>Extracellular space</location>
        <location>Extracellular matrix</location>
    </subcellularLocation>
</comment>
<comment type="alternative products">
    <event type="alternative splicing"/>
    <isoform>
        <id>P70232-1</id>
        <name>1</name>
        <sequence type="displayed"/>
    </isoform>
    <isoform>
        <id>P70232-2</id>
        <name>2</name>
        <sequence type="described" ref="VSP_020083 VSP_020084 VSP_020085"/>
    </isoform>
</comment>
<comment type="tissue specificity">
    <text evidence="6 12 15">Expressed in the brain, in the cerebellum and in the spinal cord. Detected in the retina and the optic nerve. Expressed in neurons and glial cells in the central nervous system and by Schwann cells in the peripheral nervous system.</text>
</comment>
<comment type="developmental stage">
    <text evidence="6 12 15">Not detectable in the forebrain at 11 dpc, weakly detectable at 13 dpc with highest detection at 18 dpc to postnatal day 7. Down-regulated at postnatal day 15 and further reduced in four-week-old animals.</text>
</comment>
<comment type="domain">
    <text>The FIG[AQ]Y motif seems to be an ankyrin recruitment region.</text>
</comment>
<comment type="domain">
    <text>The DGEA motif seems to be a recognition site for integrin.</text>
</comment>
<comment type="PTM">
    <text evidence="11 14">Cleavage by metalloprotease ADAM8 in the extracellular part generates 2 soluble forms (125 kDa and 165 kDa) in vitro and is inhibited by metalloprotease inhibitors. In brain extracts, these two soluble forms are also present and are dramatically reduced in mice lacking ADAM8 (PubMed:14761956). Cleaved by BACE1 (PubMed:29325091).</text>
</comment>
<comment type="PTM">
    <text evidence="15">N-glycosylated. Contains N-linked oligosaccharides with a sulfated carbohydrate structure type HNK-1 (SO4-3-GlcUABeta1,3GalBeta1,4GlcNAc).</text>
</comment>
<comment type="PTM">
    <text evidence="15">O-glycosylated.</text>
</comment>
<comment type="disruption phenotype">
    <text evidence="7 9 10 13">Mice exhibit misguided axonal projections and aberrant axonal connectivity. They show alterations of hippocampal fiber organization and olfactory axon projections. Their exploratory behavior in novel environments is altered suggesting deficits in information processing and in attention. They also display signs of decreased stress and are more sociable and less aggressive. Heterozygous mice exhibit half levels of CHL1 expression in the hippocampus compared to their wild-type littermates, reflecting a gene dosage effect.</text>
</comment>
<comment type="similarity">
    <text evidence="17">Belongs to the immunoglobulin superfamily. L1/neurofascin/NgCAM family.</text>
</comment>
<comment type="sequence caution" evidence="17">
    <conflict type="frameshift">
        <sequence resource="EMBL-CDS" id="BAC30699"/>
    </conflict>
</comment>
<name>NCHL1_MOUSE</name>
<organism>
    <name type="scientific">Mus musculus</name>
    <name type="common">Mouse</name>
    <dbReference type="NCBI Taxonomy" id="10090"/>
    <lineage>
        <taxon>Eukaryota</taxon>
        <taxon>Metazoa</taxon>
        <taxon>Chordata</taxon>
        <taxon>Craniata</taxon>
        <taxon>Vertebrata</taxon>
        <taxon>Euteleostomi</taxon>
        <taxon>Mammalia</taxon>
        <taxon>Eutheria</taxon>
        <taxon>Euarchontoglires</taxon>
        <taxon>Glires</taxon>
        <taxon>Rodentia</taxon>
        <taxon>Myomorpha</taxon>
        <taxon>Muroidea</taxon>
        <taxon>Muridae</taxon>
        <taxon>Murinae</taxon>
        <taxon>Mus</taxon>
        <taxon>Mus</taxon>
    </lineage>
</organism>
<reference key="1">
    <citation type="journal article" date="1996" name="Eur. J. Neurosci.">
        <title>Structural features of a close homologue of L1 (CHL1) in the mouse: a new member of the L1 family of neural recognition molecules.</title>
        <authorList>
            <person name="Holm J."/>
            <person name="Hillenbrand R."/>
            <person name="Steuber V."/>
            <person name="Bartsch U."/>
            <person name="Moos M."/>
            <person name="Luebbert H."/>
            <person name="Montag D."/>
            <person name="Schachner M."/>
        </authorList>
    </citation>
    <scope>NUCLEOTIDE SEQUENCE [MRNA] (ISOFORM 1)</scope>
    <scope>TISSUE SPECIFICITY</scope>
    <scope>GLYCOSYLATION</scope>
    <scope>DEVELOPMENTAL STAGE</scope>
</reference>
<reference key="2">
    <citation type="journal article" date="2005" name="Science">
        <title>The transcriptional landscape of the mammalian genome.</title>
        <authorList>
            <person name="Carninci P."/>
            <person name="Kasukawa T."/>
            <person name="Katayama S."/>
            <person name="Gough J."/>
            <person name="Frith M.C."/>
            <person name="Maeda N."/>
            <person name="Oyama R."/>
            <person name="Ravasi T."/>
            <person name="Lenhard B."/>
            <person name="Wells C."/>
            <person name="Kodzius R."/>
            <person name="Shimokawa K."/>
            <person name="Bajic V.B."/>
            <person name="Brenner S.E."/>
            <person name="Batalov S."/>
            <person name="Forrest A.R."/>
            <person name="Zavolan M."/>
            <person name="Davis M.J."/>
            <person name="Wilming L.G."/>
            <person name="Aidinis V."/>
            <person name="Allen J.E."/>
            <person name="Ambesi-Impiombato A."/>
            <person name="Apweiler R."/>
            <person name="Aturaliya R.N."/>
            <person name="Bailey T.L."/>
            <person name="Bansal M."/>
            <person name="Baxter L."/>
            <person name="Beisel K.W."/>
            <person name="Bersano T."/>
            <person name="Bono H."/>
            <person name="Chalk A.M."/>
            <person name="Chiu K.P."/>
            <person name="Choudhary V."/>
            <person name="Christoffels A."/>
            <person name="Clutterbuck D.R."/>
            <person name="Crowe M.L."/>
            <person name="Dalla E."/>
            <person name="Dalrymple B.P."/>
            <person name="de Bono B."/>
            <person name="Della Gatta G."/>
            <person name="di Bernardo D."/>
            <person name="Down T."/>
            <person name="Engstrom P."/>
            <person name="Fagiolini M."/>
            <person name="Faulkner G."/>
            <person name="Fletcher C.F."/>
            <person name="Fukushima T."/>
            <person name="Furuno M."/>
            <person name="Futaki S."/>
            <person name="Gariboldi M."/>
            <person name="Georgii-Hemming P."/>
            <person name="Gingeras T.R."/>
            <person name="Gojobori T."/>
            <person name="Green R.E."/>
            <person name="Gustincich S."/>
            <person name="Harbers M."/>
            <person name="Hayashi Y."/>
            <person name="Hensch T.K."/>
            <person name="Hirokawa N."/>
            <person name="Hill D."/>
            <person name="Huminiecki L."/>
            <person name="Iacono M."/>
            <person name="Ikeo K."/>
            <person name="Iwama A."/>
            <person name="Ishikawa T."/>
            <person name="Jakt M."/>
            <person name="Kanapin A."/>
            <person name="Katoh M."/>
            <person name="Kawasawa Y."/>
            <person name="Kelso J."/>
            <person name="Kitamura H."/>
            <person name="Kitano H."/>
            <person name="Kollias G."/>
            <person name="Krishnan S.P."/>
            <person name="Kruger A."/>
            <person name="Kummerfeld S.K."/>
            <person name="Kurochkin I.V."/>
            <person name="Lareau L.F."/>
            <person name="Lazarevic D."/>
            <person name="Lipovich L."/>
            <person name="Liu J."/>
            <person name="Liuni S."/>
            <person name="McWilliam S."/>
            <person name="Madan Babu M."/>
            <person name="Madera M."/>
            <person name="Marchionni L."/>
            <person name="Matsuda H."/>
            <person name="Matsuzawa S."/>
            <person name="Miki H."/>
            <person name="Mignone F."/>
            <person name="Miyake S."/>
            <person name="Morris K."/>
            <person name="Mottagui-Tabar S."/>
            <person name="Mulder N."/>
            <person name="Nakano N."/>
            <person name="Nakauchi H."/>
            <person name="Ng P."/>
            <person name="Nilsson R."/>
            <person name="Nishiguchi S."/>
            <person name="Nishikawa S."/>
            <person name="Nori F."/>
            <person name="Ohara O."/>
            <person name="Okazaki Y."/>
            <person name="Orlando V."/>
            <person name="Pang K.C."/>
            <person name="Pavan W.J."/>
            <person name="Pavesi G."/>
            <person name="Pesole G."/>
            <person name="Petrovsky N."/>
            <person name="Piazza S."/>
            <person name="Reed J."/>
            <person name="Reid J.F."/>
            <person name="Ring B.Z."/>
            <person name="Ringwald M."/>
            <person name="Rost B."/>
            <person name="Ruan Y."/>
            <person name="Salzberg S.L."/>
            <person name="Sandelin A."/>
            <person name="Schneider C."/>
            <person name="Schoenbach C."/>
            <person name="Sekiguchi K."/>
            <person name="Semple C.A."/>
            <person name="Seno S."/>
            <person name="Sessa L."/>
            <person name="Sheng Y."/>
            <person name="Shibata Y."/>
            <person name="Shimada H."/>
            <person name="Shimada K."/>
            <person name="Silva D."/>
            <person name="Sinclair B."/>
            <person name="Sperling S."/>
            <person name="Stupka E."/>
            <person name="Sugiura K."/>
            <person name="Sultana R."/>
            <person name="Takenaka Y."/>
            <person name="Taki K."/>
            <person name="Tammoja K."/>
            <person name="Tan S.L."/>
            <person name="Tang S."/>
            <person name="Taylor M.S."/>
            <person name="Tegner J."/>
            <person name="Teichmann S.A."/>
            <person name="Ueda H.R."/>
            <person name="van Nimwegen E."/>
            <person name="Verardo R."/>
            <person name="Wei C.L."/>
            <person name="Yagi K."/>
            <person name="Yamanishi H."/>
            <person name="Zabarovsky E."/>
            <person name="Zhu S."/>
            <person name="Zimmer A."/>
            <person name="Hide W."/>
            <person name="Bult C."/>
            <person name="Grimmond S.M."/>
            <person name="Teasdale R.D."/>
            <person name="Liu E.T."/>
            <person name="Brusic V."/>
            <person name="Quackenbush J."/>
            <person name="Wahlestedt C."/>
            <person name="Mattick J.S."/>
            <person name="Hume D.A."/>
            <person name="Kai C."/>
            <person name="Sasaki D."/>
            <person name="Tomaru Y."/>
            <person name="Fukuda S."/>
            <person name="Kanamori-Katayama M."/>
            <person name="Suzuki M."/>
            <person name="Aoki J."/>
            <person name="Arakawa T."/>
            <person name="Iida J."/>
            <person name="Imamura K."/>
            <person name="Itoh M."/>
            <person name="Kato T."/>
            <person name="Kawaji H."/>
            <person name="Kawagashira N."/>
            <person name="Kawashima T."/>
            <person name="Kojima M."/>
            <person name="Kondo S."/>
            <person name="Konno H."/>
            <person name="Nakano K."/>
            <person name="Ninomiya N."/>
            <person name="Nishio T."/>
            <person name="Okada M."/>
            <person name="Plessy C."/>
            <person name="Shibata K."/>
            <person name="Shiraki T."/>
            <person name="Suzuki S."/>
            <person name="Tagami M."/>
            <person name="Waki K."/>
            <person name="Watahiki A."/>
            <person name="Okamura-Oho Y."/>
            <person name="Suzuki H."/>
            <person name="Kawai J."/>
            <person name="Hayashizaki Y."/>
        </authorList>
    </citation>
    <scope>NUCLEOTIDE SEQUENCE [LARGE SCALE MRNA] (ISOFORM 2)</scope>
    <scope>NUCLEOTIDE SEQUENCE [LARGE SCALE MRNA] OF 1-425 AND 666-1209 (ISOFORM 1)</scope>
    <source>
        <strain>C57BL/6J</strain>
        <tissue>Aorta</tissue>
        <tissue>Head</tissue>
        <tissue>Vein</tissue>
    </source>
</reference>
<reference key="3">
    <citation type="journal article" date="2009" name="PLoS Biol.">
        <title>Lineage-specific biology revealed by a finished genome assembly of the mouse.</title>
        <authorList>
            <person name="Church D.M."/>
            <person name="Goodstadt L."/>
            <person name="Hillier L.W."/>
            <person name="Zody M.C."/>
            <person name="Goldstein S."/>
            <person name="She X."/>
            <person name="Bult C.J."/>
            <person name="Agarwala R."/>
            <person name="Cherry J.L."/>
            <person name="DiCuccio M."/>
            <person name="Hlavina W."/>
            <person name="Kapustin Y."/>
            <person name="Meric P."/>
            <person name="Maglott D."/>
            <person name="Birtle Z."/>
            <person name="Marques A.C."/>
            <person name="Graves T."/>
            <person name="Zhou S."/>
            <person name="Teague B."/>
            <person name="Potamousis K."/>
            <person name="Churas C."/>
            <person name="Place M."/>
            <person name="Herschleb J."/>
            <person name="Runnheim R."/>
            <person name="Forrest D."/>
            <person name="Amos-Landgraf J."/>
            <person name="Schwartz D.C."/>
            <person name="Cheng Z."/>
            <person name="Lindblad-Toh K."/>
            <person name="Eichler E.E."/>
            <person name="Ponting C.P."/>
        </authorList>
    </citation>
    <scope>NUCLEOTIDE SEQUENCE [LARGE SCALE GENOMIC DNA]</scope>
    <source>
        <strain>C57BL/6J</strain>
    </source>
</reference>
<reference key="4">
    <citation type="submission" date="2005-07" db="EMBL/GenBank/DDBJ databases">
        <authorList>
            <person name="Mural R.J."/>
            <person name="Adams M.D."/>
            <person name="Myers E.W."/>
            <person name="Smith H.O."/>
            <person name="Venter J.C."/>
        </authorList>
    </citation>
    <scope>NUCLEOTIDE SEQUENCE [LARGE SCALE GENOMIC DNA]</scope>
</reference>
<reference key="5">
    <citation type="journal article" date="2004" name="Genome Res.">
        <title>The status, quality, and expansion of the NIH full-length cDNA project: the Mammalian Gene Collection (MGC).</title>
        <authorList>
            <consortium name="The MGC Project Team"/>
        </authorList>
    </citation>
    <scope>NUCLEOTIDE SEQUENCE [LARGE SCALE MRNA]</scope>
</reference>
<reference key="6">
    <citation type="journal article" date="2002" name="Mol. Cell. Biol.">
        <title>Misguided axonal projections, neural cell adhesion molecule 180 mRNA upregulation, and altered behavior in mice deficient for the close homolog of L1.</title>
        <authorList>
            <person name="Montag-Sallaz M."/>
            <person name="Schachner M."/>
            <person name="Montag D."/>
        </authorList>
    </citation>
    <scope>NUCLEOTIDE SEQUENCE [GENOMIC DNA] OF 1-129</scope>
    <scope>FUNCTION</scope>
    <scope>DISRUPTION PHENOTYPE</scope>
    <source>
        <strain>129/Sv</strain>
    </source>
</reference>
<reference key="7">
    <citation type="journal article" date="1999" name="Eur. J. Neurosci.">
        <title>The close homologue of the neural adhesion molecule L1 (CHL1): patterns of expression and promotion of neurite outgrowth by heterophilic interactions.</title>
        <authorList>
            <person name="Hillenbrand R."/>
            <person name="Molthagen M."/>
            <person name="Montag D."/>
            <person name="Schachner M."/>
        </authorList>
    </citation>
    <scope>FUNCTION</scope>
    <scope>DEVELOPMENTAL STAGE</scope>
    <scope>INTERACTION WITH L1CAM</scope>
    <scope>TISSUE SPECIFICITY</scope>
</reference>
<reference key="8">
    <citation type="journal article" date="1999" name="J. Neurobiol.">
        <title>Prevention of neuronal cell death by neural adhesion molecules L1 and CHL1.</title>
        <authorList>
            <person name="Chen S."/>
            <person name="Mantei N."/>
            <person name="Dong L."/>
            <person name="Schachner M."/>
        </authorList>
    </citation>
    <scope>FUNCTION</scope>
</reference>
<reference key="9">
    <citation type="journal article" date="2003" name="Behav. Brain Res.">
        <title>Mice deficient for the close homologue of the neural adhesion cell L1 (CHL1) display alterations in emotional reactivity and motor coordination.</title>
        <authorList>
            <person name="Pratte M."/>
            <person name="Rougon G."/>
            <person name="Schachner M."/>
            <person name="Jamon M."/>
        </authorList>
    </citation>
    <scope>FUNCTION</scope>
    <scope>DISRUPTION PHENOTYPE</scope>
</reference>
<reference key="10">
    <citation type="journal article" date="2003" name="Hum. Mol. Genet.">
        <title>CALL interrupted in a patient with non-specific mental retardation: gene dosage-dependent alteration of murine brain development and behavior.</title>
        <authorList>
            <person name="Frints S.G.M."/>
            <person name="Marynen P."/>
            <person name="Hartmann D."/>
            <person name="Fryns J.-P."/>
            <person name="Steyaert J."/>
            <person name="Schachner M."/>
            <person name="Rolf B."/>
            <person name="Craessaerts K."/>
            <person name="Snellinx A."/>
            <person name="Hollanders K."/>
            <person name="D'Hooge R."/>
            <person name="De Deyn P.P."/>
            <person name="Froyen G."/>
        </authorList>
    </citation>
    <scope>FUNCTION</scope>
    <scope>DISRUPTION PHENOTYPE</scope>
</reference>
<reference key="11">
    <citation type="journal article" date="2003" name="J. Biol. Chem.">
        <title>Close homolog of L1 is an enhancer of integrin-mediated cell migration.</title>
        <authorList>
            <person name="Buhusi M."/>
            <person name="Midkiff B.R."/>
            <person name="Gates A.M."/>
            <person name="Richter M."/>
            <person name="Schachner M."/>
            <person name="Maness P.F."/>
        </authorList>
    </citation>
    <scope>FUNCTION</scope>
    <scope>INTERACTION WITH ANK3; ITGB1/ITGA1 HETERODIMER AND ITGB1/ITGA2 HETERODIMER</scope>
    <scope>MOTIFS</scope>
    <scope>MUTAGENESIS OF 555-ASP--ALA-558 AND TYR-1186</scope>
</reference>
<reference key="12">
    <citation type="journal article" date="2004" name="J. Biol. Chem.">
        <title>Ectodomain shedding of the neural recognition molecule CHL1 by the metalloprotease-disintegrin ADAM8 promotes neurite outgrowth and suppresses neuronal cell death.</title>
        <authorList>
            <person name="Naus S."/>
            <person name="Richter M."/>
            <person name="Wildeboer D."/>
            <person name="Moss M."/>
            <person name="Schachner M."/>
            <person name="Bartsch J.W."/>
        </authorList>
    </citation>
    <scope>FUNCTION</scope>
    <scope>CLEAVAGE BY ADAM8</scope>
</reference>
<reference key="13">
    <citation type="journal article" date="2004" name="Neuron">
        <title>Close homolog of L1 modulates area-specific neuronal positioning and dendrite orientation in the cerebral cortex.</title>
        <authorList>
            <person name="Demyanenko G.P."/>
            <person name="Schachner M."/>
            <person name="Anton E."/>
            <person name="Schmid R."/>
            <person name="Feng G."/>
            <person name="Sanes J."/>
            <person name="Maness P.F."/>
        </authorList>
    </citation>
    <scope>FUNCTION</scope>
    <scope>TISSUE SPECIFICITY</scope>
    <scope>DEVELOPMENTAL STAGE</scope>
</reference>
<reference key="14">
    <citation type="journal article" date="2006" name="Eur. J. Neurosci.">
        <title>Enhanced perisomatic inhibition and impaired long-term potentiation in the CA1 region of juvenile CHL1-deficient mice.</title>
        <authorList>
            <person name="Nikonenko A.G."/>
            <person name="Sun M."/>
            <person name="Lepsveridze E."/>
            <person name="Apostolova I."/>
            <person name="Petrova I."/>
            <person name="Irintchev A."/>
            <person name="Dityatev A."/>
            <person name="Schachner M."/>
        </authorList>
    </citation>
    <scope>FUNCTION</scope>
    <scope>DISRUPTION PHENOTYPE</scope>
</reference>
<reference key="15">
    <citation type="journal article" date="2010" name="Cell">
        <title>A tissue-specific atlas of mouse protein phosphorylation and expression.</title>
        <authorList>
            <person name="Huttlin E.L."/>
            <person name="Jedrychowski M.P."/>
            <person name="Elias J.E."/>
            <person name="Goswami T."/>
            <person name="Rad R."/>
            <person name="Beausoleil S.A."/>
            <person name="Villen J."/>
            <person name="Haas W."/>
            <person name="Sowa M.E."/>
            <person name="Gygi S.P."/>
        </authorList>
    </citation>
    <scope>PHOSPHORYLATION [LARGE SCALE ANALYSIS] AT SER-1148; SER-1161 AND SER-1181</scope>
    <scope>IDENTIFICATION BY MASS SPECTROMETRY [LARGE SCALE ANALYSIS]</scope>
    <source>
        <tissue>Brain</tissue>
    </source>
</reference>
<reference key="16">
    <citation type="journal article" date="2018" name="J. Mol. Cell Biol.">
        <title>alpha-secretase ADAM10 physically interacts with beta-secretase BACE1 in neurons and regulates CHL1 proteolysis.</title>
        <authorList>
            <person name="Wang X."/>
            <person name="Wang C."/>
            <person name="Pei G."/>
        </authorList>
    </citation>
    <scope>CLEAVAGE BY BACE1</scope>
</reference>
<accession>P70232</accession>
<accession>A2RRK1</accession>
<accession>Q8BS24</accession>
<accession>Q8C6W0</accession>
<accession>Q8C823</accession>
<accession>Q8VBY7</accession>
<proteinExistence type="evidence at protein level"/>
<keyword id="KW-0025">Alternative splicing</keyword>
<keyword id="KW-0130">Cell adhesion</keyword>
<keyword id="KW-1003">Cell membrane</keyword>
<keyword id="KW-0217">Developmental protein</keyword>
<keyword id="KW-0221">Differentiation</keyword>
<keyword id="KW-1015">Disulfide bond</keyword>
<keyword id="KW-0272">Extracellular matrix</keyword>
<keyword id="KW-0325">Glycoprotein</keyword>
<keyword id="KW-0393">Immunoglobulin domain</keyword>
<keyword id="KW-0472">Membrane</keyword>
<keyword id="KW-0524">Neurogenesis</keyword>
<keyword id="KW-0597">Phosphoprotein</keyword>
<keyword id="KW-1185">Reference proteome</keyword>
<keyword id="KW-0677">Repeat</keyword>
<keyword id="KW-0964">Secreted</keyword>
<keyword id="KW-0732">Signal</keyword>
<keyword id="KW-0812">Transmembrane</keyword>
<keyword id="KW-1133">Transmembrane helix</keyword>
<dbReference type="EMBL" id="X94310">
    <property type="protein sequence ID" value="CAA63972.1"/>
    <property type="molecule type" value="mRNA"/>
</dbReference>
<dbReference type="EMBL" id="AK040765">
    <property type="protein sequence ID" value="BAC30699.1"/>
    <property type="status" value="ALT_FRAME"/>
    <property type="molecule type" value="mRNA"/>
</dbReference>
<dbReference type="EMBL" id="AK048639">
    <property type="protein sequence ID" value="BAC33405.1"/>
    <property type="molecule type" value="mRNA"/>
</dbReference>
<dbReference type="EMBL" id="AK053039">
    <property type="protein sequence ID" value="BAC35247.2"/>
    <property type="molecule type" value="mRNA"/>
</dbReference>
<dbReference type="EMBL" id="AC153595">
    <property type="status" value="NOT_ANNOTATED_CDS"/>
    <property type="molecule type" value="Genomic_DNA"/>
</dbReference>
<dbReference type="EMBL" id="AC153598">
    <property type="status" value="NOT_ANNOTATED_CDS"/>
    <property type="molecule type" value="Genomic_DNA"/>
</dbReference>
<dbReference type="EMBL" id="AC161824">
    <property type="status" value="NOT_ANNOTATED_CDS"/>
    <property type="molecule type" value="Genomic_DNA"/>
</dbReference>
<dbReference type="EMBL" id="CH466523">
    <property type="protein sequence ID" value="EDK99388.1"/>
    <property type="molecule type" value="Genomic_DNA"/>
</dbReference>
<dbReference type="EMBL" id="BC131670">
    <property type="protein sequence ID" value="AAI31671.1"/>
    <property type="molecule type" value="mRNA"/>
</dbReference>
<dbReference type="EMBL" id="BC131671">
    <property type="protein sequence ID" value="AAI31672.1"/>
    <property type="molecule type" value="mRNA"/>
</dbReference>
<dbReference type="EMBL" id="AJ319655">
    <property type="protein sequence ID" value="CAC88131.1"/>
    <property type="molecule type" value="Genomic_DNA"/>
</dbReference>
<dbReference type="EMBL" id="AJ319656">
    <property type="protein sequence ID" value="CAC88131.1"/>
    <property type="status" value="JOINED"/>
    <property type="molecule type" value="Genomic_DNA"/>
</dbReference>
<dbReference type="EMBL" id="AJ319657">
    <property type="protein sequence ID" value="CAC88131.1"/>
    <property type="status" value="JOINED"/>
    <property type="molecule type" value="Genomic_DNA"/>
</dbReference>
<dbReference type="CCDS" id="CCDS39582.1">
    <molecule id="P70232-1"/>
</dbReference>
<dbReference type="PIR" id="T42718">
    <property type="entry name" value="T42718"/>
</dbReference>
<dbReference type="RefSeq" id="NP_031723.2">
    <molecule id="P70232-1"/>
    <property type="nucleotide sequence ID" value="NM_007697.2"/>
</dbReference>
<dbReference type="RefSeq" id="XP_006505535.1">
    <molecule id="P70232-1"/>
    <property type="nucleotide sequence ID" value="XM_006505472.4"/>
</dbReference>
<dbReference type="RefSeq" id="XP_017176864.1">
    <property type="nucleotide sequence ID" value="XM_017321375.1"/>
</dbReference>
<dbReference type="RefSeq" id="XP_017176865.1">
    <molecule id="P70232-1"/>
    <property type="nucleotide sequence ID" value="XM_017321376.3"/>
</dbReference>
<dbReference type="RefSeq" id="XP_030110992.1">
    <molecule id="P70232-1"/>
    <property type="nucleotide sequence ID" value="XM_030255132.2"/>
</dbReference>
<dbReference type="RefSeq" id="XP_030110993.1">
    <molecule id="P70232-1"/>
    <property type="nucleotide sequence ID" value="XM_030255133.2"/>
</dbReference>
<dbReference type="RefSeq" id="XP_036021686.1">
    <molecule id="P70232-1"/>
    <property type="nucleotide sequence ID" value="XM_036165793.1"/>
</dbReference>
<dbReference type="SMR" id="P70232"/>
<dbReference type="BioGRID" id="198702">
    <property type="interactions" value="6"/>
</dbReference>
<dbReference type="FunCoup" id="P70232">
    <property type="interactions" value="338"/>
</dbReference>
<dbReference type="IntAct" id="P70232">
    <property type="interactions" value="2"/>
</dbReference>
<dbReference type="MINT" id="P70232"/>
<dbReference type="STRING" id="10090.ENSMUSP00000063933"/>
<dbReference type="GlyConnect" id="2538">
    <property type="glycosylation" value="11 N-Linked glycans (5 sites)"/>
</dbReference>
<dbReference type="GlyCosmos" id="P70232">
    <property type="glycosylation" value="10 sites, 11 glycans"/>
</dbReference>
<dbReference type="GlyGen" id="P70232">
    <property type="glycosylation" value="16 sites, 20 N-linked glycans (13 sites), 1 O-linked glycan (1 site)"/>
</dbReference>
<dbReference type="iPTMnet" id="P70232"/>
<dbReference type="PhosphoSitePlus" id="P70232"/>
<dbReference type="SwissPalm" id="P70232"/>
<dbReference type="CPTAC" id="non-CPTAC-3993"/>
<dbReference type="jPOST" id="P70232"/>
<dbReference type="PaxDb" id="10090-ENSMUSP00000063933"/>
<dbReference type="PeptideAtlas" id="P70232"/>
<dbReference type="ProteomicsDB" id="252651">
    <molecule id="P70232-1"/>
</dbReference>
<dbReference type="ProteomicsDB" id="252652">
    <molecule id="P70232-2"/>
</dbReference>
<dbReference type="ABCD" id="P70232">
    <property type="antibodies" value="2 sequenced antibodies"/>
</dbReference>
<dbReference type="Antibodypedia" id="1160">
    <property type="antibodies" value="139 antibodies from 25 providers"/>
</dbReference>
<dbReference type="DNASU" id="12661"/>
<dbReference type="Ensembl" id="ENSMUST00000066905.9">
    <molecule id="P70232-1"/>
    <property type="protein sequence ID" value="ENSMUSP00000063933.7"/>
    <property type="gene ID" value="ENSMUSG00000030077.12"/>
</dbReference>
<dbReference type="Ensembl" id="ENSMUST00000203830.3">
    <molecule id="P70232-1"/>
    <property type="protein sequence ID" value="ENSMUSP00000144758.2"/>
    <property type="gene ID" value="ENSMUSG00000030077.12"/>
</dbReference>
<dbReference type="Ensembl" id="ENSMUST00000203912.3">
    <molecule id="P70232-2"/>
    <property type="protein sequence ID" value="ENSMUSP00000145026.2"/>
    <property type="gene ID" value="ENSMUSG00000030077.12"/>
</dbReference>
<dbReference type="GeneID" id="12661"/>
<dbReference type="KEGG" id="mmu:12661"/>
<dbReference type="UCSC" id="uc009dcj.1">
    <molecule id="P70232-1"/>
    <property type="organism name" value="mouse"/>
</dbReference>
<dbReference type="UCSC" id="uc009dck.1">
    <molecule id="P70232-2"/>
    <property type="organism name" value="mouse"/>
</dbReference>
<dbReference type="AGR" id="MGI:1098266"/>
<dbReference type="CTD" id="10752"/>
<dbReference type="MGI" id="MGI:1098266">
    <property type="gene designation" value="Chl1"/>
</dbReference>
<dbReference type="VEuPathDB" id="HostDB:ENSMUSG00000030077"/>
<dbReference type="eggNOG" id="KOG3513">
    <property type="taxonomic scope" value="Eukaryota"/>
</dbReference>
<dbReference type="GeneTree" id="ENSGT00940000160080"/>
<dbReference type="HOGENOM" id="CLU_005756_1_1_1"/>
<dbReference type="InParanoid" id="P70232"/>
<dbReference type="OMA" id="RARHEFH"/>
<dbReference type="OrthoDB" id="6244967at2759"/>
<dbReference type="PhylomeDB" id="P70232"/>
<dbReference type="TreeFam" id="TF351098"/>
<dbReference type="BioGRID-ORCS" id="12661">
    <property type="hits" value="1 hit in 78 CRISPR screens"/>
</dbReference>
<dbReference type="ChiTaRS" id="Chl1">
    <property type="organism name" value="mouse"/>
</dbReference>
<dbReference type="PRO" id="PR:P70232"/>
<dbReference type="Proteomes" id="UP000000589">
    <property type="component" value="Chromosome 6"/>
</dbReference>
<dbReference type="RNAct" id="P70232">
    <property type="molecule type" value="protein"/>
</dbReference>
<dbReference type="Bgee" id="ENSMUSG00000030077">
    <property type="expression patterns" value="Expressed in spermatid and 167 other cell types or tissues"/>
</dbReference>
<dbReference type="ExpressionAtlas" id="P70232">
    <property type="expression patterns" value="baseline and differential"/>
</dbReference>
<dbReference type="GO" id="GO:0045177">
    <property type="term" value="C:apical part of cell"/>
    <property type="evidence" value="ECO:0000314"/>
    <property type="project" value="MGI"/>
</dbReference>
<dbReference type="GO" id="GO:0030425">
    <property type="term" value="C:dendrite"/>
    <property type="evidence" value="ECO:0000314"/>
    <property type="project" value="MGI"/>
</dbReference>
<dbReference type="GO" id="GO:0005576">
    <property type="term" value="C:extracellular region"/>
    <property type="evidence" value="ECO:0007669"/>
    <property type="project" value="UniProtKB-KW"/>
</dbReference>
<dbReference type="GO" id="GO:0005886">
    <property type="term" value="C:plasma membrane"/>
    <property type="evidence" value="ECO:0000304"/>
    <property type="project" value="Reactome"/>
</dbReference>
<dbReference type="GO" id="GO:0002020">
    <property type="term" value="F:protease binding"/>
    <property type="evidence" value="ECO:0000353"/>
    <property type="project" value="BHF-UCL"/>
</dbReference>
<dbReference type="GO" id="GO:0008344">
    <property type="term" value="P:adult locomotory behavior"/>
    <property type="evidence" value="ECO:0000315"/>
    <property type="project" value="MGI"/>
</dbReference>
<dbReference type="GO" id="GO:0007411">
    <property type="term" value="P:axon guidance"/>
    <property type="evidence" value="ECO:0000315"/>
    <property type="project" value="MGI"/>
</dbReference>
<dbReference type="GO" id="GO:0031103">
    <property type="term" value="P:axon regeneration"/>
    <property type="evidence" value="ECO:0007669"/>
    <property type="project" value="Ensembl"/>
</dbReference>
<dbReference type="GO" id="GO:0007155">
    <property type="term" value="P:cell adhesion"/>
    <property type="evidence" value="ECO:0007669"/>
    <property type="project" value="UniProtKB-KW"/>
</dbReference>
<dbReference type="GO" id="GO:0050890">
    <property type="term" value="P:cognition"/>
    <property type="evidence" value="ECO:0000315"/>
    <property type="project" value="MGI"/>
</dbReference>
<dbReference type="GO" id="GO:0035640">
    <property type="term" value="P:exploration behavior"/>
    <property type="evidence" value="ECO:0000315"/>
    <property type="project" value="MGI"/>
</dbReference>
<dbReference type="GO" id="GO:0043524">
    <property type="term" value="P:negative regulation of neuron apoptotic process"/>
    <property type="evidence" value="ECO:0000314"/>
    <property type="project" value="BHF-UCL"/>
</dbReference>
<dbReference type="GO" id="GO:0001764">
    <property type="term" value="P:neuron migration"/>
    <property type="evidence" value="ECO:0000315"/>
    <property type="project" value="MGI"/>
</dbReference>
<dbReference type="GO" id="GO:0031175">
    <property type="term" value="P:neuron projection development"/>
    <property type="evidence" value="ECO:0000314"/>
    <property type="project" value="MGI"/>
</dbReference>
<dbReference type="CDD" id="cd00063">
    <property type="entry name" value="FN3"/>
    <property type="match status" value="4"/>
</dbReference>
<dbReference type="CDD" id="cd04978">
    <property type="entry name" value="Ig4_L1-NrCAM_like"/>
    <property type="match status" value="1"/>
</dbReference>
<dbReference type="CDD" id="cd05845">
    <property type="entry name" value="IgI_2_L1-CAM_like"/>
    <property type="match status" value="1"/>
</dbReference>
<dbReference type="FunFam" id="2.60.40.10:FF:000057">
    <property type="entry name" value="neural cell adhesion molecule L1"/>
    <property type="match status" value="1"/>
</dbReference>
<dbReference type="FunFam" id="2.60.40.10:FF:000063">
    <property type="entry name" value="neural cell adhesion molecule L1"/>
    <property type="match status" value="1"/>
</dbReference>
<dbReference type="FunFam" id="2.60.40.10:FF:000367">
    <property type="entry name" value="Neural cell adhesion molecule L1-like protein"/>
    <property type="match status" value="1"/>
</dbReference>
<dbReference type="FunFam" id="2.60.40.10:FF:000418">
    <property type="entry name" value="Neural cell adhesion molecule L1-like protein"/>
    <property type="match status" value="1"/>
</dbReference>
<dbReference type="FunFam" id="2.60.40.10:FF:000703">
    <property type="entry name" value="Neural cell adhesion molecule L1-like protein"/>
    <property type="match status" value="1"/>
</dbReference>
<dbReference type="FunFam" id="2.60.40.10:FF:000768">
    <property type="entry name" value="Neural cell adhesion molecule L1-like protein"/>
    <property type="match status" value="1"/>
</dbReference>
<dbReference type="FunFam" id="2.60.40.10:FF:000535">
    <property type="entry name" value="neural cell adhesion molecule L1-like protein isoform X1"/>
    <property type="match status" value="1"/>
</dbReference>
<dbReference type="FunFam" id="2.60.40.10:FF:000742">
    <property type="entry name" value="neural cell adhesion molecule L1-like protein isoform X2"/>
    <property type="match status" value="1"/>
</dbReference>
<dbReference type="FunFam" id="2.60.40.10:FF:000005">
    <property type="entry name" value="Neuronal cell adhesion molecule"/>
    <property type="match status" value="1"/>
</dbReference>
<dbReference type="FunFam" id="2.60.40.10:FF:000038">
    <property type="entry name" value="Neuronal cell adhesion molecule"/>
    <property type="match status" value="1"/>
</dbReference>
<dbReference type="Gene3D" id="2.60.40.10">
    <property type="entry name" value="Immunoglobulins"/>
    <property type="match status" value="10"/>
</dbReference>
<dbReference type="InterPro" id="IPR003961">
    <property type="entry name" value="FN3_dom"/>
</dbReference>
<dbReference type="InterPro" id="IPR036116">
    <property type="entry name" value="FN3_sf"/>
</dbReference>
<dbReference type="InterPro" id="IPR007110">
    <property type="entry name" value="Ig-like_dom"/>
</dbReference>
<dbReference type="InterPro" id="IPR036179">
    <property type="entry name" value="Ig-like_dom_sf"/>
</dbReference>
<dbReference type="InterPro" id="IPR013783">
    <property type="entry name" value="Ig-like_fold"/>
</dbReference>
<dbReference type="InterPro" id="IPR013098">
    <property type="entry name" value="Ig_I-set"/>
</dbReference>
<dbReference type="InterPro" id="IPR003599">
    <property type="entry name" value="Ig_sub"/>
</dbReference>
<dbReference type="InterPro" id="IPR003598">
    <property type="entry name" value="Ig_sub2"/>
</dbReference>
<dbReference type="InterPro" id="IPR026966">
    <property type="entry name" value="Neurofascin/L1/NrCAM_C"/>
</dbReference>
<dbReference type="PANTHER" id="PTHR44170:SF45">
    <property type="entry name" value="NEURAL CELL ADHESION MOLECULE L1-LIKE PROTEIN ISOFORM X1"/>
    <property type="match status" value="1"/>
</dbReference>
<dbReference type="PANTHER" id="PTHR44170">
    <property type="entry name" value="PROTEIN SIDEKICK"/>
    <property type="match status" value="1"/>
</dbReference>
<dbReference type="Pfam" id="PF13882">
    <property type="entry name" value="Bravo_FIGEY"/>
    <property type="match status" value="1"/>
</dbReference>
<dbReference type="Pfam" id="PF00041">
    <property type="entry name" value="fn3"/>
    <property type="match status" value="4"/>
</dbReference>
<dbReference type="Pfam" id="PF07679">
    <property type="entry name" value="I-set"/>
    <property type="match status" value="2"/>
</dbReference>
<dbReference type="Pfam" id="PF13895">
    <property type="entry name" value="Ig_2"/>
    <property type="match status" value="1"/>
</dbReference>
<dbReference type="Pfam" id="PF13927">
    <property type="entry name" value="Ig_3"/>
    <property type="match status" value="2"/>
</dbReference>
<dbReference type="SMART" id="SM00060">
    <property type="entry name" value="FN3"/>
    <property type="match status" value="4"/>
</dbReference>
<dbReference type="SMART" id="SM00409">
    <property type="entry name" value="IG"/>
    <property type="match status" value="5"/>
</dbReference>
<dbReference type="SMART" id="SM00408">
    <property type="entry name" value="IGc2"/>
    <property type="match status" value="5"/>
</dbReference>
<dbReference type="SUPFAM" id="SSF49265">
    <property type="entry name" value="Fibronectin type III"/>
    <property type="match status" value="2"/>
</dbReference>
<dbReference type="SUPFAM" id="SSF48726">
    <property type="entry name" value="Immunoglobulin"/>
    <property type="match status" value="6"/>
</dbReference>
<dbReference type="PROSITE" id="PS50853">
    <property type="entry name" value="FN3"/>
    <property type="match status" value="4"/>
</dbReference>
<dbReference type="PROSITE" id="PS50835">
    <property type="entry name" value="IG_LIKE"/>
    <property type="match status" value="6"/>
</dbReference>
<sequence length="1209" mass="135074">MMELPLCGRGLILSLIFLLLKLSAAEIPLSVQQVPTIVKQSYVQVAFPFDEYFQIECEAKGNPEPIFSWTKDDKPFDLSDPRIIAANNSGTFKIPNEGHISHFQGKYRCFASNRLGTAVSEEIEFIVPGVPKFPKEKIEPIDVEEGDSIVLPCNPPKGLPPLHIYWMNIELEHIEQDERVYMSQRGDLYFANVEENDSRNDYCCFAAFPKLRTIVQKMPMKLTVNSSNSIKQRKPKLLLPPAQMGSLSAKTVLKGDTLLLECFAEGLPTPHIQWSKPGSELPEGRATIEVHEKTLKIENISYQDRGNYRCTANNLLGKASHDFHVTVEEPPRWKKKPQSAVYSTGSSGILLCEAEGEPQPTIKWRLNGLPIEKHPFPGDFMFPREISFTNLLPNHTGVYQCEASNIHGTILANANIDVIDVIPLIKTKNEENYATVVGYSAFLHCEYFASPKATVVWEVADETHPLEGDRYHTHENGTLEIYRTTEEDAGSYSCWVDNAMGKAVITANLDIRNATKLRVSPKNPRIPKSHVLELYCESQCDSHLKHSLKLSWSKDGEAFEMNGTEDGRIVIDGAYLTISNITAEDQGVYSCSAQTSLDSTSEKTQVTVLGVPDPPGNLHLSERQNRSVRLSWEAGDDHNSKISEYIVEFEGNREEPGKWEELTRVQGEETDVVLSLAPYVRYQFRVTAVNEVGRSHASLPSDHHETPPAAPDKNPQNIRVQASQPKEMIIKWEPLKSMEQNGPGLEYKVSWKPQGAPEEWEEEIVTNHTLRVMTPTVYAPYDVKVQAINQLGSSPDPQPVTLYSGEDYPSTAPVIQRVDVMNSTLVKVTWSSIPKETVHGLLRGYQINWWKTKSLLDGRTHPKEVNILRFSGQRNSGMVPSLDPFSEFHLTVLAYNSKGAGPESEPYIFQTPEGVPEQPSFLKVIKVDKDTATLSWGLPKKLNGNLTGYLLQYQIINDTYELGELNEINVTTPSKSSWHLSNLNSTTKYKFYLRACTSRGCGKPISEEGATLGEGSKGIRKITEGVNVTQKIHPVEVLVPGAEHIVHLMTKNWGDNDSIFQDVIETRGREYAGLYDDISTQGWFIGLMCAIALLTLILLTICFVKRNRGGKYSVKEKEDLHPDPEVQSAKDETFGEYSDSDEKPLKGSLRSLNRNMQPTESADSLVEYGEGDQSIFNEDGSFIGAYTGAKEKGSVESNGSSTATFPLRA</sequence>
<protein>
    <recommendedName>
        <fullName>Neural cell adhesion molecule L1-like protein</fullName>
    </recommendedName>
    <alternativeName>
        <fullName>Cell adhesion molecule with homology to L1CAM</fullName>
    </alternativeName>
    <alternativeName>
        <fullName>Chl1-like protein</fullName>
    </alternativeName>
    <alternativeName>
        <fullName>Close homolog of L1</fullName>
    </alternativeName>
    <component>
        <recommendedName>
            <fullName>Processed neural cell adhesion molecule L1-like protein</fullName>
        </recommendedName>
    </component>
</protein>
<evidence type="ECO:0000255" key="1"/>
<evidence type="ECO:0000255" key="2">
    <source>
        <dbReference type="PROSITE-ProRule" id="PRU00114"/>
    </source>
</evidence>
<evidence type="ECO:0000255" key="3">
    <source>
        <dbReference type="PROSITE-ProRule" id="PRU00316"/>
    </source>
</evidence>
<evidence type="ECO:0000256" key="4">
    <source>
        <dbReference type="SAM" id="MobiDB-lite"/>
    </source>
</evidence>
<evidence type="ECO:0000269" key="5">
    <source>
    </source>
</evidence>
<evidence type="ECO:0000269" key="6">
    <source>
    </source>
</evidence>
<evidence type="ECO:0000269" key="7">
    <source>
    </source>
</evidence>
<evidence type="ECO:0000269" key="8">
    <source>
    </source>
</evidence>
<evidence type="ECO:0000269" key="9">
    <source>
    </source>
</evidence>
<evidence type="ECO:0000269" key="10">
    <source>
    </source>
</evidence>
<evidence type="ECO:0000269" key="11">
    <source>
    </source>
</evidence>
<evidence type="ECO:0000269" key="12">
    <source>
    </source>
</evidence>
<evidence type="ECO:0000269" key="13">
    <source>
    </source>
</evidence>
<evidence type="ECO:0000269" key="14">
    <source>
    </source>
</evidence>
<evidence type="ECO:0000269" key="15">
    <source>
    </source>
</evidence>
<evidence type="ECO:0000303" key="16">
    <source>
    </source>
</evidence>
<evidence type="ECO:0000305" key="17"/>
<evidence type="ECO:0007744" key="18">
    <source>
    </source>
</evidence>
<feature type="signal peptide" evidence="1">
    <location>
        <begin position="1"/>
        <end position="25"/>
    </location>
</feature>
<feature type="chain" id="PRO_0000247897" description="Neural cell adhesion molecule L1-like protein">
    <location>
        <begin position="26"/>
        <end position="1209"/>
    </location>
</feature>
<feature type="chain" id="PRO_0000314778" description="Processed neural cell adhesion molecule L1-like protein" evidence="1">
    <location>
        <begin position="26"/>
        <end status="unknown"/>
    </location>
</feature>
<feature type="topological domain" description="Extracellular" evidence="1">
    <location>
        <begin position="26"/>
        <end position="1083"/>
    </location>
</feature>
<feature type="transmembrane region" description="Helical" evidence="1">
    <location>
        <begin position="1084"/>
        <end position="1104"/>
    </location>
</feature>
<feature type="topological domain" description="Cytoplasmic" evidence="1">
    <location>
        <begin position="1105"/>
        <end position="1209"/>
    </location>
</feature>
<feature type="domain" description="Ig-like C2-type 1">
    <location>
        <begin position="35"/>
        <end position="124"/>
    </location>
</feature>
<feature type="domain" description="Ig-like C2-type 2">
    <location>
        <begin position="128"/>
        <end position="223"/>
    </location>
</feature>
<feature type="domain" description="Ig-like C2-type 3">
    <location>
        <begin position="235"/>
        <end position="328"/>
    </location>
</feature>
<feature type="domain" description="Ig-like C2-type 4">
    <location>
        <begin position="331"/>
        <end position="417"/>
    </location>
</feature>
<feature type="domain" description="Ig-like C2-type 5">
    <location>
        <begin position="423"/>
        <end position="510"/>
    </location>
</feature>
<feature type="domain" description="Ig-like C2-type 6">
    <location>
        <begin position="515"/>
        <end position="607"/>
    </location>
</feature>
<feature type="domain" description="Fibronectin type-III 1" evidence="3">
    <location>
        <begin position="614"/>
        <end position="709"/>
    </location>
</feature>
<feature type="domain" description="Fibronectin type-III 2" evidence="3">
    <location>
        <begin position="714"/>
        <end position="807"/>
    </location>
</feature>
<feature type="domain" description="Fibronectin type-III 3" evidence="3">
    <location>
        <begin position="812"/>
        <end position="914"/>
    </location>
</feature>
<feature type="domain" description="Fibronectin type-III 4" evidence="3">
    <location>
        <begin position="918"/>
        <end position="1015"/>
    </location>
</feature>
<feature type="region of interest" description="Disordered" evidence="4">
    <location>
        <begin position="696"/>
        <end position="717"/>
    </location>
</feature>
<feature type="region of interest" description="Disordered" evidence="4">
    <location>
        <begin position="1115"/>
        <end position="1170"/>
    </location>
</feature>
<feature type="short sequence motif" description="DGEA">
    <location>
        <begin position="555"/>
        <end position="558"/>
    </location>
</feature>
<feature type="short sequence motif" description="FIG[AQ]Y">
    <location>
        <begin position="1182"/>
        <end position="1186"/>
    </location>
</feature>
<feature type="compositionally biased region" description="Basic and acidic residues" evidence="4">
    <location>
        <begin position="1115"/>
        <end position="1133"/>
    </location>
</feature>
<feature type="compositionally biased region" description="Polar residues" evidence="4">
    <location>
        <begin position="1150"/>
        <end position="1162"/>
    </location>
</feature>
<feature type="site" description="Cleavage; by ADAM8">
    <location>
        <begin position="753"/>
        <end position="754"/>
    </location>
</feature>
<feature type="site" description="Cleavage; by ADAM8">
    <location>
        <begin position="1040"/>
        <end position="1041"/>
    </location>
</feature>
<feature type="modified residue" description="Phosphoserine" evidence="18">
    <location>
        <position position="1148"/>
    </location>
</feature>
<feature type="modified residue" description="Phosphoserine" evidence="18">
    <location>
        <position position="1161"/>
    </location>
</feature>
<feature type="modified residue" description="Phosphoserine" evidence="18">
    <location>
        <position position="1181"/>
    </location>
</feature>
<feature type="glycosylation site" description="N-linked (GlcNAc...) asparagine" evidence="1">
    <location>
        <position position="87"/>
    </location>
</feature>
<feature type="glycosylation site" description="N-linked (GlcNAc...) asparagine" evidence="1">
    <location>
        <position position="225"/>
    </location>
</feature>
<feature type="glycosylation site" description="N-linked (GlcNAc...) asparagine" evidence="1">
    <location>
        <position position="299"/>
    </location>
</feature>
<feature type="glycosylation site" description="N-linked (GlcNAc...) asparagine" evidence="1">
    <location>
        <position position="476"/>
    </location>
</feature>
<feature type="glycosylation site" description="N-linked (GlcNAc...) asparagine" evidence="1">
    <location>
        <position position="562"/>
    </location>
</feature>
<feature type="glycosylation site" description="N-linked (GlcNAc...) asparagine" evidence="1">
    <location>
        <position position="580"/>
    </location>
</feature>
<feature type="glycosylation site" description="N-linked (GlcNAc...) asparagine" evidence="1">
    <location>
        <position position="767"/>
    </location>
</feature>
<feature type="glycosylation site" description="N-linked (GlcNAc...) asparagine" evidence="1">
    <location>
        <position position="822"/>
    </location>
</feature>
<feature type="glycosylation site" description="N-linked (GlcNAc...) asparagine" evidence="1">
    <location>
        <position position="945"/>
    </location>
</feature>
<feature type="glycosylation site" description="N-linked (GlcNAc...) asparagine" evidence="1">
    <location>
        <position position="1027"/>
    </location>
</feature>
<feature type="disulfide bond" evidence="2">
    <location>
        <begin position="57"/>
        <end position="109"/>
    </location>
</feature>
<feature type="disulfide bond" evidence="2">
    <location>
        <begin position="153"/>
        <end position="204"/>
    </location>
</feature>
<feature type="disulfide bond" evidence="2">
    <location>
        <begin position="262"/>
        <end position="310"/>
    </location>
</feature>
<feature type="disulfide bond" evidence="2">
    <location>
        <begin position="352"/>
        <end position="401"/>
    </location>
</feature>
<feature type="disulfide bond" evidence="2">
    <location>
        <begin position="445"/>
        <end position="494"/>
    </location>
</feature>
<feature type="disulfide bond" evidence="2">
    <location>
        <begin position="536"/>
        <end position="591"/>
    </location>
</feature>
<feature type="splice variant" id="VSP_020083" description="In isoform 2." evidence="16">
    <original>S</original>
    <variation>LKHASDSSSSTEICSQA</variation>
    <location>
        <position position="227"/>
    </location>
</feature>
<feature type="splice variant" id="VSP_020084" description="In isoform 2." evidence="16">
    <original>SKGIRKITEGVNVTQKIHPVEVLVPGAEHIVHLMTKNWGDNDSIFQDVIETRGRE</original>
    <variation>K</variation>
    <location>
        <begin position="1016"/>
        <end position="1070"/>
    </location>
</feature>
<feature type="splice variant" id="VSP_020085" description="In isoform 2." evidence="16">
    <original>SDSDEKPLKGSLRSLNRNMQPTESADSLVEYGEGDQSIFNEDGSFIGAYTGAKEKGSVESNGSSTATFPLRA</original>
    <variation>RKMVLKQKLLSWSSSRGRTFYSCTKNTLFDGSSVDMKTLQPLRYFSSNKHT</variation>
    <location>
        <begin position="1138"/>
        <end position="1209"/>
    </location>
</feature>
<feature type="mutagenesis site" description="Inhibition of migration potentiation." evidence="8">
    <original>DGEA</original>
    <variation>AGEV</variation>
    <location>
        <begin position="555"/>
        <end position="558"/>
    </location>
</feature>
<feature type="mutagenesis site" description="Inhibition of migration potentiation." evidence="8">
    <original>Y</original>
    <variation>A</variation>
    <location>
        <position position="1186"/>
    </location>
</feature>
<feature type="sequence conflict" description="In Ref. 2; BAC35247." evidence="17" ref="2">
    <original>D</original>
    <variation>G</variation>
    <location>
        <position position="50"/>
    </location>
</feature>
<feature type="sequence conflict" description="In Ref. 6; CAC88131." evidence="17" ref="6">
    <original>D</original>
    <variation>E</variation>
    <location>
        <position position="77"/>
    </location>
</feature>
<feature type="sequence conflict" description="In Ref. 2; BAC35247." evidence="17" ref="2">
    <original>I</original>
    <variation>V</variation>
    <location>
        <position position="425"/>
    </location>
</feature>
<feature type="sequence conflict" description="In Ref. 1; CAA63972." evidence="17" ref="1">
    <original>E</original>
    <variation>K</variation>
    <location>
        <position position="602"/>
    </location>
</feature>
<feature type="sequence conflict" description="In Ref. 1; CAA63972." evidence="17" ref="1">
    <original>P</original>
    <variation>G</variation>
    <location>
        <position position="612"/>
    </location>
</feature>
<gene>
    <name type="primary">Chl1</name>
    <name type="synonym">Call</name>
</gene>